<reference key="1">
    <citation type="journal article" date="1989" name="Infect. Immun.">
        <title>Molecular cloning and nucleotide sequence of the colonization factor antigen I gene of Escherichia coli.</title>
        <authorList>
            <person name="Karjalainen T.K."/>
            <person name="Evans D.G."/>
            <person name="So M."/>
            <person name="Lee C.-H."/>
        </authorList>
    </citation>
    <scope>NUCLEOTIDE SEQUENCE [GENOMIC DNA]</scope>
    <source>
        <strain>H10407 / ETEC</strain>
    </source>
</reference>
<reference key="2">
    <citation type="journal article" date="2010" name="J. Bacteriol.">
        <title>A commensal gone bad: complete genome sequence of the prototypical enterotoxigenic Escherichia coli strain H10407.</title>
        <authorList>
            <person name="Crossman L.C."/>
            <person name="Chaudhuri R.R."/>
            <person name="Beatson S.A."/>
            <person name="Wells T.J."/>
            <person name="Desvaux M."/>
            <person name="Cunningham A.F."/>
            <person name="Petty N.K."/>
            <person name="Mahon V."/>
            <person name="Brinkley C."/>
            <person name="Hobman J.L."/>
            <person name="Savarino S.J."/>
            <person name="Turner S.M."/>
            <person name="Pallen M.J."/>
            <person name="Penn C.W."/>
            <person name="Parkhill J."/>
            <person name="Turner A.K."/>
            <person name="Johnson T.J."/>
            <person name="Thomson N.R."/>
            <person name="Smith S.G."/>
            <person name="Henderson I.R."/>
        </authorList>
    </citation>
    <scope>NUCLEOTIDE SEQUENCE [LARGE SCALE GENOMIC DNA]</scope>
    <source>
        <strain>H10407 / ETEC</strain>
        <plasmid>p948</plasmid>
    </source>
</reference>
<reference key="3">
    <citation type="journal article" date="1982" name="Eur. J. Biochem.">
        <title>Primary structure of the CFA1 fimbrial protein from human enterotoxigenic Escherichia coli strains.</title>
        <authorList>
            <person name="Klemm P."/>
        </authorList>
    </citation>
    <scope>NUCLEOTIDE SEQUENCE [GENOMIC DNA] OF 24-170</scope>
    <source>
        <strain>H10407 / ETEC</strain>
    </source>
</reference>
<reference key="4">
    <citation type="journal article" date="1989" name="J. Bacteriol.">
        <title>Purification and analysis of colonization factor antigen I, coli surface antigen 1, and coli surface antigen 3 fimbriae from enterotoxigenic Escherichia coli.</title>
        <authorList>
            <person name="Hall R.H."/>
            <person name="Maneval D.R. Jr."/>
            <person name="Collins J.H."/>
            <person name="Theibert J.L."/>
            <person name="Levine M.M."/>
        </authorList>
    </citation>
    <scope>PROTEIN SEQUENCE OF 24-42</scope>
    <source>
        <strain>H10407 / ETEC</strain>
    </source>
</reference>
<dbReference type="EMBL" id="FN649418">
    <property type="protein sequence ID" value="CBJ04487.1"/>
    <property type="molecule type" value="Genomic_DNA"/>
</dbReference>
<dbReference type="PIR" id="A30589">
    <property type="entry name" value="YQECC1"/>
</dbReference>
<dbReference type="RefSeq" id="WP_000669510.1">
    <property type="nucleotide sequence ID" value="NC_017724.1"/>
</dbReference>
<dbReference type="PDB" id="3F83">
    <property type="method" value="X-ray"/>
    <property type="resolution" value="2.30 A"/>
    <property type="chains" value="A=24-170"/>
</dbReference>
<dbReference type="PDB" id="3F84">
    <property type="method" value="X-ray"/>
    <property type="resolution" value="2.35 A"/>
    <property type="chains" value="A/B=24-170"/>
</dbReference>
<dbReference type="PDB" id="3F85">
    <property type="method" value="X-ray"/>
    <property type="resolution" value="2.10 A"/>
    <property type="chains" value="A=24-170"/>
</dbReference>
<dbReference type="PDB" id="4Y2L">
    <property type="method" value="X-ray"/>
    <property type="resolution" value="1.75 A"/>
    <property type="chains" value="A/B/C/D/E/F=25-170"/>
</dbReference>
<dbReference type="PDB" id="4Y2N">
    <property type="method" value="X-ray"/>
    <property type="resolution" value="2.40 A"/>
    <property type="chains" value="A/B/C=25-170"/>
</dbReference>
<dbReference type="PDB" id="4Y2O">
    <property type="method" value="X-ray"/>
    <property type="resolution" value="2.42 A"/>
    <property type="chains" value="B=37-170"/>
</dbReference>
<dbReference type="PDBsum" id="3F83"/>
<dbReference type="PDBsum" id="3F84"/>
<dbReference type="PDBsum" id="3F85"/>
<dbReference type="PDBsum" id="4Y2L"/>
<dbReference type="PDBsum" id="4Y2N"/>
<dbReference type="PDBsum" id="4Y2O"/>
<dbReference type="SMR" id="E3PPC4"/>
<dbReference type="KEGG" id="elh:ETEC_p948_0400"/>
<dbReference type="HOGENOM" id="CLU_129877_0_0_6"/>
<dbReference type="EvolutionaryTrace" id="E3PPC4"/>
<dbReference type="GO" id="GO:0009289">
    <property type="term" value="C:pilus"/>
    <property type="evidence" value="ECO:0007669"/>
    <property type="project" value="UniProtKB-SubCell"/>
</dbReference>
<dbReference type="Gene3D" id="2.60.40.2040">
    <property type="entry name" value="CFA/I fimbrial subunit E, pilin domain"/>
    <property type="match status" value="2"/>
</dbReference>
<dbReference type="InterPro" id="IPR007540">
    <property type="entry name" value="Fimbrial_CS1-type"/>
</dbReference>
<dbReference type="Pfam" id="PF04449">
    <property type="entry name" value="Fimbrial_CS1"/>
    <property type="match status" value="1"/>
</dbReference>
<proteinExistence type="evidence at protein level"/>
<geneLocation type="plasmid">
    <name>p948</name>
</geneLocation>
<feature type="signal peptide" evidence="1">
    <location>
        <begin position="1"/>
        <end position="23"/>
    </location>
</feature>
<feature type="chain" id="PRO_0000405303" description="CFA/I fimbrial subunit B">
    <location>
        <begin position="24"/>
        <end position="170"/>
    </location>
</feature>
<feature type="sequence conflict" description="In Ref. 3; no nucleotide entry." evidence="2" ref="3">
    <original>D</original>
    <variation>N</variation>
    <location>
        <position position="76"/>
    </location>
</feature>
<feature type="sequence conflict" description="In Ref. 3; no nucleotide entry." evidence="2" ref="3">
    <original>S</original>
    <variation>A</variation>
    <location>
        <position position="97"/>
    </location>
</feature>
<feature type="strand" evidence="3">
    <location>
        <begin position="25"/>
        <end position="34"/>
    </location>
</feature>
<feature type="strand" evidence="3">
    <location>
        <begin position="36"/>
        <end position="42"/>
    </location>
</feature>
<feature type="strand" evidence="3">
    <location>
        <begin position="50"/>
        <end position="53"/>
    </location>
</feature>
<feature type="turn" evidence="3">
    <location>
        <begin position="58"/>
        <end position="61"/>
    </location>
</feature>
<feature type="strand" evidence="3">
    <location>
        <begin position="66"/>
        <end position="75"/>
    </location>
</feature>
<feature type="turn" evidence="4">
    <location>
        <begin position="76"/>
        <end position="79"/>
    </location>
</feature>
<feature type="strand" evidence="3">
    <location>
        <begin position="81"/>
        <end position="87"/>
    </location>
</feature>
<feature type="strand" evidence="3">
    <location>
        <begin position="90"/>
        <end position="93"/>
    </location>
</feature>
<feature type="strand" evidence="3">
    <location>
        <begin position="96"/>
        <end position="107"/>
    </location>
</feature>
<feature type="strand" evidence="3">
    <location>
        <begin position="117"/>
        <end position="119"/>
    </location>
</feature>
<feature type="turn" evidence="3">
    <location>
        <begin position="121"/>
        <end position="125"/>
    </location>
</feature>
<feature type="helix" evidence="3">
    <location>
        <begin position="126"/>
        <end position="129"/>
    </location>
</feature>
<feature type="strand" evidence="3">
    <location>
        <begin position="138"/>
        <end position="144"/>
    </location>
</feature>
<feature type="strand" evidence="4">
    <location>
        <begin position="147"/>
        <end position="150"/>
    </location>
</feature>
<feature type="strand" evidence="3">
    <location>
        <begin position="155"/>
        <end position="168"/>
    </location>
</feature>
<keyword id="KW-0002">3D-structure</keyword>
<keyword id="KW-0903">Direct protein sequencing</keyword>
<keyword id="KW-0281">Fimbrium</keyword>
<keyword id="KW-0614">Plasmid</keyword>
<keyword id="KW-0732">Signal</keyword>
<name>FMC1_ECOH1</name>
<sequence length="170" mass="17461">MKFKKTIGAMALTTMFVAVSASAVEKNITVTASVDPVIDLLQADGNALPSAVKLAYSPASKTFESYRVMTQVHTNDATKKVIVKLADTPQLTDVLNSTVQMPISVSWGGQVLSTTAKEFEAAALGYSASGVNGVSSSQELVISAAPKTAGTAPTAGNYSGVVSLVMTLGS</sequence>
<protein>
    <recommendedName>
        <fullName>CFA/I fimbrial subunit B</fullName>
    </recommendedName>
    <alternativeName>
        <fullName>CFA/I antigen</fullName>
    </alternativeName>
    <alternativeName>
        <fullName>CFA/I pilin</fullName>
    </alternativeName>
    <alternativeName>
        <fullName>Colonization factor antigen I subunit B</fullName>
    </alternativeName>
</protein>
<accession>E3PPC4</accession>
<accession>P02971</accession>
<evidence type="ECO:0000269" key="1">
    <source>
    </source>
</evidence>
<evidence type="ECO:0000305" key="2"/>
<evidence type="ECO:0007829" key="3">
    <source>
        <dbReference type="PDB" id="4Y2L"/>
    </source>
</evidence>
<evidence type="ECO:0007829" key="4">
    <source>
        <dbReference type="PDB" id="4Y2O"/>
    </source>
</evidence>
<gene>
    <name type="primary">cfaB</name>
    <name type="ordered locus">ETEC_p948_0400</name>
</gene>
<organism>
    <name type="scientific">Escherichia coli O78:H11 (strain H10407 / ETEC)</name>
    <dbReference type="NCBI Taxonomy" id="316401"/>
    <lineage>
        <taxon>Bacteria</taxon>
        <taxon>Pseudomonadati</taxon>
        <taxon>Pseudomonadota</taxon>
        <taxon>Gammaproteobacteria</taxon>
        <taxon>Enterobacterales</taxon>
        <taxon>Enterobacteriaceae</taxon>
        <taxon>Escherichia</taxon>
    </lineage>
</organism>
<comment type="function">
    <text>Fimbriae (also called pili), polar filaments radiating from the surface of the bacterium to a length of 0.5-1.5 micrometers and numbering 100-300 per cell, enable bacteria to colonize the epithelium of specific host organs.</text>
</comment>
<comment type="subunit">
    <text>CFA/I fimbriae are rather rigid, thread-like filaments of 0.5-1 micrometer, with an apparent axial hole, and a diameter of 7 nanometers. A single CFA/I fimbria consists of about 100 identical protein subunits.</text>
</comment>
<comment type="subcellular location">
    <subcellularLocation>
        <location>Fimbrium</location>
    </subcellularLocation>
</comment>
<comment type="induction">
    <text>CFA/I fimbriae are only expressed in the presence of the positive regulator CfaD.</text>
</comment>
<comment type="similarity">
    <text evidence="2">Belongs to the fimbrial CS1 protein family.</text>
</comment>